<organism>
    <name type="scientific">Neisseria meningitidis serogroup C (strain 053442)</name>
    <dbReference type="NCBI Taxonomy" id="374833"/>
    <lineage>
        <taxon>Bacteria</taxon>
        <taxon>Pseudomonadati</taxon>
        <taxon>Pseudomonadota</taxon>
        <taxon>Betaproteobacteria</taxon>
        <taxon>Neisseriales</taxon>
        <taxon>Neisseriaceae</taxon>
        <taxon>Neisseria</taxon>
    </lineage>
</organism>
<proteinExistence type="inferred from homology"/>
<sequence>MLDREGYRPNVGIILINERNEVFWGKRVREHSWQFPQGGIKPGESPETAMYRELYEEVGLLPQHVKIVGRTRDWLRYDVPNNWVRREWRGSYRGQKQIWYLLRLTGRDCDVNLRATRHPEFDGWRWHQYWAPVDEVIEFKRDVYLGALKELSSRFLRGMESYEDFAARQPSGNR</sequence>
<feature type="chain" id="PRO_1000078967" description="RNA pyrophosphohydrolase">
    <location>
        <begin position="1"/>
        <end position="174"/>
    </location>
</feature>
<feature type="domain" description="Nudix hydrolase" evidence="1">
    <location>
        <begin position="6"/>
        <end position="149"/>
    </location>
</feature>
<feature type="short sequence motif" description="Nudix box">
    <location>
        <begin position="38"/>
        <end position="59"/>
    </location>
</feature>
<name>RPPH_NEIM0</name>
<dbReference type="EC" id="3.6.1.-" evidence="1"/>
<dbReference type="EMBL" id="CP000381">
    <property type="protein sequence ID" value="ABX73744.1"/>
    <property type="molecule type" value="Genomic_DNA"/>
</dbReference>
<dbReference type="RefSeq" id="WP_002235114.1">
    <property type="nucleotide sequence ID" value="NC_010120.1"/>
</dbReference>
<dbReference type="SMR" id="A9M1Q5"/>
<dbReference type="KEGG" id="nmn:NMCC_1596"/>
<dbReference type="HOGENOM" id="CLU_087195_3_1_4"/>
<dbReference type="Proteomes" id="UP000001177">
    <property type="component" value="Chromosome"/>
</dbReference>
<dbReference type="GO" id="GO:0016462">
    <property type="term" value="F:pyrophosphatase activity"/>
    <property type="evidence" value="ECO:0007669"/>
    <property type="project" value="UniProtKB-ARBA"/>
</dbReference>
<dbReference type="CDD" id="cd03671">
    <property type="entry name" value="NUDIX_Ap4A_hydrolase_plant_like"/>
    <property type="match status" value="1"/>
</dbReference>
<dbReference type="FunFam" id="3.90.79.10:FF:000001">
    <property type="entry name" value="RNA pyrophosphohydrolase"/>
    <property type="match status" value="1"/>
</dbReference>
<dbReference type="Gene3D" id="3.90.79.10">
    <property type="entry name" value="Nucleoside Triphosphate Pyrophosphohydrolase"/>
    <property type="match status" value="1"/>
</dbReference>
<dbReference type="HAMAP" id="MF_00298">
    <property type="entry name" value="Nudix_RppH"/>
    <property type="match status" value="1"/>
</dbReference>
<dbReference type="InterPro" id="IPR020476">
    <property type="entry name" value="Nudix_hydrolase"/>
</dbReference>
<dbReference type="InterPro" id="IPR015797">
    <property type="entry name" value="NUDIX_hydrolase-like_dom_sf"/>
</dbReference>
<dbReference type="InterPro" id="IPR020084">
    <property type="entry name" value="NUDIX_hydrolase_CS"/>
</dbReference>
<dbReference type="InterPro" id="IPR000086">
    <property type="entry name" value="NUDIX_hydrolase_dom"/>
</dbReference>
<dbReference type="InterPro" id="IPR022927">
    <property type="entry name" value="RppH"/>
</dbReference>
<dbReference type="NCBIfam" id="NF001935">
    <property type="entry name" value="PRK00714.1-2"/>
    <property type="match status" value="1"/>
</dbReference>
<dbReference type="NCBIfam" id="NF001937">
    <property type="entry name" value="PRK00714.1-4"/>
    <property type="match status" value="1"/>
</dbReference>
<dbReference type="NCBIfam" id="NF001938">
    <property type="entry name" value="PRK00714.1-5"/>
    <property type="match status" value="1"/>
</dbReference>
<dbReference type="PANTHER" id="PTHR43736">
    <property type="entry name" value="ADP-RIBOSE PYROPHOSPHATASE"/>
    <property type="match status" value="1"/>
</dbReference>
<dbReference type="PANTHER" id="PTHR43736:SF1">
    <property type="entry name" value="DIHYDRONEOPTERIN TRIPHOSPHATE DIPHOSPHATASE"/>
    <property type="match status" value="1"/>
</dbReference>
<dbReference type="Pfam" id="PF00293">
    <property type="entry name" value="NUDIX"/>
    <property type="match status" value="1"/>
</dbReference>
<dbReference type="PRINTS" id="PR00502">
    <property type="entry name" value="NUDIXFAMILY"/>
</dbReference>
<dbReference type="SUPFAM" id="SSF55811">
    <property type="entry name" value="Nudix"/>
    <property type="match status" value="1"/>
</dbReference>
<dbReference type="PROSITE" id="PS51462">
    <property type="entry name" value="NUDIX"/>
    <property type="match status" value="1"/>
</dbReference>
<dbReference type="PROSITE" id="PS00893">
    <property type="entry name" value="NUDIX_BOX"/>
    <property type="match status" value="1"/>
</dbReference>
<comment type="function">
    <text evidence="1">Accelerates the degradation of transcripts by removing pyrophosphate from the 5'-end of triphosphorylated RNA, leading to a more labile monophosphorylated state that can stimulate subsequent ribonuclease cleavage.</text>
</comment>
<comment type="cofactor">
    <cofactor evidence="1">
        <name>a divalent metal cation</name>
        <dbReference type="ChEBI" id="CHEBI:60240"/>
    </cofactor>
</comment>
<comment type="similarity">
    <text evidence="1">Belongs to the Nudix hydrolase family. RppH subfamily.</text>
</comment>
<evidence type="ECO:0000255" key="1">
    <source>
        <dbReference type="HAMAP-Rule" id="MF_00298"/>
    </source>
</evidence>
<keyword id="KW-0378">Hydrolase</keyword>
<protein>
    <recommendedName>
        <fullName evidence="1">RNA pyrophosphohydrolase</fullName>
        <ecNumber evidence="1">3.6.1.-</ecNumber>
    </recommendedName>
    <alternativeName>
        <fullName evidence="1">(Di)nucleoside polyphosphate hydrolase</fullName>
    </alternativeName>
</protein>
<accession>A9M1Q5</accession>
<reference key="1">
    <citation type="journal article" date="2008" name="Genomics">
        <title>Characterization of ST-4821 complex, a unique Neisseria meningitidis clone.</title>
        <authorList>
            <person name="Peng J."/>
            <person name="Yang L."/>
            <person name="Yang F."/>
            <person name="Yang J."/>
            <person name="Yan Y."/>
            <person name="Nie H."/>
            <person name="Zhang X."/>
            <person name="Xiong Z."/>
            <person name="Jiang Y."/>
            <person name="Cheng F."/>
            <person name="Xu X."/>
            <person name="Chen S."/>
            <person name="Sun L."/>
            <person name="Li W."/>
            <person name="Shen Y."/>
            <person name="Shao Z."/>
            <person name="Liang X."/>
            <person name="Xu J."/>
            <person name="Jin Q."/>
        </authorList>
    </citation>
    <scope>NUCLEOTIDE SEQUENCE [LARGE SCALE GENOMIC DNA]</scope>
    <source>
        <strain>053442</strain>
    </source>
</reference>
<gene>
    <name evidence="1" type="primary">rppH</name>
    <name evidence="1" type="synonym">nudH</name>
    <name type="ordered locus">NMCC_1596</name>
</gene>